<feature type="chain" id="PRO_0000380063" description="GTP-dependent dephospho-CoA kinase">
    <location>
        <begin position="1"/>
        <end position="178"/>
    </location>
</feature>
<feature type="binding site" evidence="1">
    <location>
        <position position="43"/>
    </location>
    <ligand>
        <name>GTP</name>
        <dbReference type="ChEBI" id="CHEBI:37565"/>
    </ligand>
</feature>
<feature type="binding site" evidence="1">
    <location>
        <position position="44"/>
    </location>
    <ligand>
        <name>GTP</name>
        <dbReference type="ChEBI" id="CHEBI:37565"/>
    </ligand>
</feature>
<feature type="binding site" evidence="1">
    <location>
        <position position="45"/>
    </location>
    <ligand>
        <name>GTP</name>
        <dbReference type="ChEBI" id="CHEBI:37565"/>
    </ligand>
</feature>
<feature type="binding site" evidence="1">
    <location>
        <position position="62"/>
    </location>
    <ligand>
        <name>GTP</name>
        <dbReference type="ChEBI" id="CHEBI:37565"/>
    </ligand>
</feature>
<feature type="binding site" evidence="1">
    <location>
        <position position="64"/>
    </location>
    <ligand>
        <name>GTP</name>
        <dbReference type="ChEBI" id="CHEBI:37565"/>
    </ligand>
</feature>
<feature type="binding site" evidence="1">
    <location>
        <position position="120"/>
    </location>
    <ligand>
        <name>GTP</name>
        <dbReference type="ChEBI" id="CHEBI:37565"/>
    </ligand>
</feature>
<evidence type="ECO:0000255" key="1">
    <source>
        <dbReference type="HAMAP-Rule" id="MF_00590"/>
    </source>
</evidence>
<proteinExistence type="inferred from homology"/>
<name>DPCKG_NATPD</name>
<protein>
    <recommendedName>
        <fullName evidence="1">GTP-dependent dephospho-CoA kinase</fullName>
        <ecNumber evidence="1">2.7.1.237</ecNumber>
    </recommendedName>
    <alternativeName>
        <fullName evidence="1">Dephospho-coenzyme A kinase</fullName>
        <shortName evidence="1">DPCK</shortName>
    </alternativeName>
</protein>
<keyword id="KW-0173">Coenzyme A biosynthesis</keyword>
<keyword id="KW-0342">GTP-binding</keyword>
<keyword id="KW-0418">Kinase</keyword>
<keyword id="KW-0547">Nucleotide-binding</keyword>
<keyword id="KW-1185">Reference proteome</keyword>
<keyword id="KW-0808">Transferase</keyword>
<organism>
    <name type="scientific">Natronomonas pharaonis (strain ATCC 35678 / DSM 2160 / CIP 103997 / JCM 8858 / NBRC 14720 / NCIMB 2260 / Gabara)</name>
    <name type="common">Halobacterium pharaonis</name>
    <dbReference type="NCBI Taxonomy" id="348780"/>
    <lineage>
        <taxon>Archaea</taxon>
        <taxon>Methanobacteriati</taxon>
        <taxon>Methanobacteriota</taxon>
        <taxon>Stenosarchaea group</taxon>
        <taxon>Halobacteria</taxon>
        <taxon>Halobacteriales</taxon>
        <taxon>Haloarculaceae</taxon>
        <taxon>Natronomonas</taxon>
    </lineage>
</organism>
<sequence>MSKILAKLPTEMRGELKDPLGEIYTDTDELLADAGDPLVAVGDIVTYHLLEAGHRPAAAIVDGKTERERVERKVLSAIEEFDERIDVANPQSTITDDLLEALSTALDRPDPTVVVVDGEEDLASLPAVVAAPVGASVVYGQPGEGMVLVHVTDETQAECRDIIERMQSDYSQIESILS</sequence>
<reference key="1">
    <citation type="journal article" date="2005" name="Genome Res.">
        <title>Living with two extremes: conclusions from the genome sequence of Natronomonas pharaonis.</title>
        <authorList>
            <person name="Falb M."/>
            <person name="Pfeiffer F."/>
            <person name="Palm P."/>
            <person name="Rodewald K."/>
            <person name="Hickmann V."/>
            <person name="Tittor J."/>
            <person name="Oesterhelt D."/>
        </authorList>
    </citation>
    <scope>NUCLEOTIDE SEQUENCE [LARGE SCALE GENOMIC DNA]</scope>
    <source>
        <strain>ATCC 35678 / DSM 2160 / CIP 103997 / JCM 8858 / NBRC 14720 / NCIMB 2260 / Gabara</strain>
    </source>
</reference>
<gene>
    <name type="ordered locus">NP_5076A</name>
</gene>
<dbReference type="EC" id="2.7.1.237" evidence="1"/>
<dbReference type="EMBL" id="CR936257">
    <property type="protein sequence ID" value="CAI50629.1"/>
    <property type="molecule type" value="Genomic_DNA"/>
</dbReference>
<dbReference type="RefSeq" id="WP_011324239.1">
    <property type="nucleotide sequence ID" value="NC_007426.1"/>
</dbReference>
<dbReference type="SMR" id="Q3IMM9"/>
<dbReference type="STRING" id="348780.NP_5076A"/>
<dbReference type="EnsemblBacteria" id="CAI50629">
    <property type="protein sequence ID" value="CAI50629"/>
    <property type="gene ID" value="NP_5076A"/>
</dbReference>
<dbReference type="GeneID" id="3702247"/>
<dbReference type="KEGG" id="nph:NP_5076A"/>
<dbReference type="eggNOG" id="arCOG04076">
    <property type="taxonomic scope" value="Archaea"/>
</dbReference>
<dbReference type="HOGENOM" id="CLU_120795_0_0_2"/>
<dbReference type="OrthoDB" id="15447at2157"/>
<dbReference type="UniPathway" id="UPA00241"/>
<dbReference type="Proteomes" id="UP000002698">
    <property type="component" value="Chromosome"/>
</dbReference>
<dbReference type="GO" id="GO:0005525">
    <property type="term" value="F:GTP binding"/>
    <property type="evidence" value="ECO:0007669"/>
    <property type="project" value="UniProtKB-UniRule"/>
</dbReference>
<dbReference type="GO" id="GO:0016301">
    <property type="term" value="F:kinase activity"/>
    <property type="evidence" value="ECO:0007669"/>
    <property type="project" value="UniProtKB-UniRule"/>
</dbReference>
<dbReference type="GO" id="GO:0015937">
    <property type="term" value="P:coenzyme A biosynthetic process"/>
    <property type="evidence" value="ECO:0007669"/>
    <property type="project" value="UniProtKB-UniRule"/>
</dbReference>
<dbReference type="HAMAP" id="MF_00590">
    <property type="entry name" value="Dephospho_CoA_kinase_GTP_dep"/>
    <property type="match status" value="1"/>
</dbReference>
<dbReference type="InterPro" id="IPR007164">
    <property type="entry name" value="GTP-dep_dephospho-CoA_kin"/>
</dbReference>
<dbReference type="PANTHER" id="PTHR40732:SF1">
    <property type="entry name" value="GTP-DEPENDENT DEPHOSPHO-COA KINASE"/>
    <property type="match status" value="1"/>
</dbReference>
<dbReference type="PANTHER" id="PTHR40732">
    <property type="entry name" value="UPF0218 PROTEIN TK1697"/>
    <property type="match status" value="1"/>
</dbReference>
<dbReference type="Pfam" id="PF04019">
    <property type="entry name" value="DUF359"/>
    <property type="match status" value="1"/>
</dbReference>
<dbReference type="PIRSF" id="PIRSF006533">
    <property type="entry name" value="UCP006533"/>
    <property type="match status" value="1"/>
</dbReference>
<accession>Q3IMM9</accession>
<comment type="function">
    <text evidence="1">Catalyzes the GTP-dependent phosphorylation of the 3'-hydroxyl group of dephosphocoenzyme A to form coenzyme A (CoA).</text>
</comment>
<comment type="catalytic activity">
    <reaction evidence="1">
        <text>3'-dephospho-CoA + GTP = GDP + CoA + H(+)</text>
        <dbReference type="Rhea" id="RHEA:61156"/>
        <dbReference type="ChEBI" id="CHEBI:15378"/>
        <dbReference type="ChEBI" id="CHEBI:37565"/>
        <dbReference type="ChEBI" id="CHEBI:57287"/>
        <dbReference type="ChEBI" id="CHEBI:57328"/>
        <dbReference type="ChEBI" id="CHEBI:58189"/>
        <dbReference type="EC" id="2.7.1.237"/>
    </reaction>
</comment>
<comment type="pathway">
    <text evidence="1">Cofactor biosynthesis; coenzyme A biosynthesis.</text>
</comment>
<comment type="similarity">
    <text evidence="1">Belongs to the GTP-dependent DPCK family.</text>
</comment>